<proteinExistence type="inferred from homology"/>
<keyword id="KW-0963">Cytoplasm</keyword>
<keyword id="KW-1185">Reference proteome</keyword>
<evidence type="ECO:0000255" key="1">
    <source>
        <dbReference type="HAMAP-Rule" id="MF_01126"/>
    </source>
</evidence>
<accession>Q88VC6</accession>
<accession>F9UQ79</accession>
<name>Y2135_LACPL</name>
<protein>
    <recommendedName>
        <fullName evidence="1">UPF0298 protein lp_2135</fullName>
    </recommendedName>
</protein>
<gene>
    <name type="ordered locus">lp_2135</name>
</gene>
<reference key="1">
    <citation type="journal article" date="2003" name="Proc. Natl. Acad. Sci. U.S.A.">
        <title>Complete genome sequence of Lactobacillus plantarum WCFS1.</title>
        <authorList>
            <person name="Kleerebezem M."/>
            <person name="Boekhorst J."/>
            <person name="van Kranenburg R."/>
            <person name="Molenaar D."/>
            <person name="Kuipers O.P."/>
            <person name="Leer R."/>
            <person name="Tarchini R."/>
            <person name="Peters S.A."/>
            <person name="Sandbrink H.M."/>
            <person name="Fiers M.W.E.J."/>
            <person name="Stiekema W."/>
            <person name="Klein Lankhorst R.M."/>
            <person name="Bron P.A."/>
            <person name="Hoffer S.M."/>
            <person name="Nierop Groot M.N."/>
            <person name="Kerkhoven R."/>
            <person name="De Vries M."/>
            <person name="Ursing B."/>
            <person name="De Vos W.M."/>
            <person name="Siezen R.J."/>
        </authorList>
    </citation>
    <scope>NUCLEOTIDE SEQUENCE [LARGE SCALE GENOMIC DNA]</scope>
    <source>
        <strain>ATCC BAA-793 / NCIMB 8826 / WCFS1</strain>
    </source>
</reference>
<reference key="2">
    <citation type="journal article" date="2012" name="J. Bacteriol.">
        <title>Complete resequencing and reannotation of the Lactobacillus plantarum WCFS1 genome.</title>
        <authorList>
            <person name="Siezen R.J."/>
            <person name="Francke C."/>
            <person name="Renckens B."/>
            <person name="Boekhorst J."/>
            <person name="Wels M."/>
            <person name="Kleerebezem M."/>
            <person name="van Hijum S.A."/>
        </authorList>
    </citation>
    <scope>NUCLEOTIDE SEQUENCE [LARGE SCALE GENOMIC DNA]</scope>
    <scope>GENOME REANNOTATION</scope>
    <source>
        <strain>ATCC BAA-793 / NCIMB 8826 / WCFS1</strain>
    </source>
</reference>
<comment type="subcellular location">
    <subcellularLocation>
        <location evidence="1">Cytoplasm</location>
    </subcellularLocation>
</comment>
<comment type="similarity">
    <text evidence="1">Belongs to the UPF0298 family.</text>
</comment>
<organism>
    <name type="scientific">Lactiplantibacillus plantarum (strain ATCC BAA-793 / NCIMB 8826 / WCFS1)</name>
    <name type="common">Lactobacillus plantarum</name>
    <dbReference type="NCBI Taxonomy" id="220668"/>
    <lineage>
        <taxon>Bacteria</taxon>
        <taxon>Bacillati</taxon>
        <taxon>Bacillota</taxon>
        <taxon>Bacilli</taxon>
        <taxon>Lactobacillales</taxon>
        <taxon>Lactobacillaceae</taxon>
        <taxon>Lactiplantibacillus</taxon>
    </lineage>
</organism>
<sequence length="100" mass="11805">MDFTVKPRRSLIVYMHSMKQVRQLKRFGLIQYQSRKEHYVVLYMDESQIPAATTKIKKLNFVRRVEPSYRPDVAMNFGERVDQGFFKPTTTGAPDDDDED</sequence>
<dbReference type="EMBL" id="AL935263">
    <property type="protein sequence ID" value="CCC79368.1"/>
    <property type="molecule type" value="Genomic_DNA"/>
</dbReference>
<dbReference type="RefSeq" id="WP_003640811.1">
    <property type="nucleotide sequence ID" value="NC_004567.2"/>
</dbReference>
<dbReference type="RefSeq" id="YP_004889882.1">
    <property type="nucleotide sequence ID" value="NC_004567.2"/>
</dbReference>
<dbReference type="SMR" id="Q88VC6"/>
<dbReference type="STRING" id="220668.lp_2135"/>
<dbReference type="EnsemblBacteria" id="CCC79368">
    <property type="protein sequence ID" value="CCC79368"/>
    <property type="gene ID" value="lp_2135"/>
</dbReference>
<dbReference type="KEGG" id="lpl:lp_2135"/>
<dbReference type="PATRIC" id="fig|220668.9.peg.1809"/>
<dbReference type="eggNOG" id="COG4471">
    <property type="taxonomic scope" value="Bacteria"/>
</dbReference>
<dbReference type="HOGENOM" id="CLU_159890_0_1_9"/>
<dbReference type="OrthoDB" id="2990788at2"/>
<dbReference type="PhylomeDB" id="Q88VC6"/>
<dbReference type="Proteomes" id="UP000000432">
    <property type="component" value="Chromosome"/>
</dbReference>
<dbReference type="GO" id="GO:0005737">
    <property type="term" value="C:cytoplasm"/>
    <property type="evidence" value="ECO:0007669"/>
    <property type="project" value="UniProtKB-SubCell"/>
</dbReference>
<dbReference type="HAMAP" id="MF_01126">
    <property type="entry name" value="UPF0298"/>
    <property type="match status" value="1"/>
</dbReference>
<dbReference type="InterPro" id="IPR016979">
    <property type="entry name" value="DUF2129"/>
</dbReference>
<dbReference type="Pfam" id="PF09902">
    <property type="entry name" value="DUF2129"/>
    <property type="match status" value="1"/>
</dbReference>
<dbReference type="PIRSF" id="PIRSF031653">
    <property type="entry name" value="UCP031653"/>
    <property type="match status" value="1"/>
</dbReference>
<feature type="chain" id="PRO_0000074659" description="UPF0298 protein lp_2135">
    <location>
        <begin position="1"/>
        <end position="100"/>
    </location>
</feature>